<dbReference type="EC" id="2.4.2.-" evidence="1"/>
<dbReference type="EC" id="2.4.2.22" evidence="1"/>
<dbReference type="EMBL" id="CP000112">
    <property type="protein sequence ID" value="ABB38305.1"/>
    <property type="molecule type" value="Genomic_DNA"/>
</dbReference>
<dbReference type="RefSeq" id="WP_011367470.1">
    <property type="nucleotide sequence ID" value="NC_007519.1"/>
</dbReference>
<dbReference type="SMR" id="Q311U1"/>
<dbReference type="STRING" id="207559.Dde_1506"/>
<dbReference type="KEGG" id="dde:Dde_1506"/>
<dbReference type="eggNOG" id="COG2236">
    <property type="taxonomic scope" value="Bacteria"/>
</dbReference>
<dbReference type="HOGENOM" id="CLU_080904_3_0_7"/>
<dbReference type="UniPathway" id="UPA00602">
    <property type="reaction ID" value="UER00658"/>
</dbReference>
<dbReference type="UniPathway" id="UPA00909">
    <property type="reaction ID" value="UER00887"/>
</dbReference>
<dbReference type="Proteomes" id="UP000002710">
    <property type="component" value="Chromosome"/>
</dbReference>
<dbReference type="GO" id="GO:0005886">
    <property type="term" value="C:plasma membrane"/>
    <property type="evidence" value="ECO:0007669"/>
    <property type="project" value="UniProtKB-SubCell"/>
</dbReference>
<dbReference type="GO" id="GO:0052657">
    <property type="term" value="F:guanine phosphoribosyltransferase activity"/>
    <property type="evidence" value="ECO:0007669"/>
    <property type="project" value="RHEA"/>
</dbReference>
<dbReference type="GO" id="GO:0004422">
    <property type="term" value="F:hypoxanthine phosphoribosyltransferase activity"/>
    <property type="evidence" value="ECO:0007669"/>
    <property type="project" value="RHEA"/>
</dbReference>
<dbReference type="GO" id="GO:0046872">
    <property type="term" value="F:metal ion binding"/>
    <property type="evidence" value="ECO:0007669"/>
    <property type="project" value="UniProtKB-KW"/>
</dbReference>
<dbReference type="GO" id="GO:0000310">
    <property type="term" value="F:xanthine phosphoribosyltransferase activity"/>
    <property type="evidence" value="ECO:0007669"/>
    <property type="project" value="UniProtKB-EC"/>
</dbReference>
<dbReference type="GO" id="GO:0032263">
    <property type="term" value="P:GMP salvage"/>
    <property type="evidence" value="ECO:0007669"/>
    <property type="project" value="UniProtKB-UniPathway"/>
</dbReference>
<dbReference type="GO" id="GO:0006166">
    <property type="term" value="P:purine ribonucleoside salvage"/>
    <property type="evidence" value="ECO:0007669"/>
    <property type="project" value="UniProtKB-KW"/>
</dbReference>
<dbReference type="GO" id="GO:0032265">
    <property type="term" value="P:XMP salvage"/>
    <property type="evidence" value="ECO:0007669"/>
    <property type="project" value="UniProtKB-UniPathway"/>
</dbReference>
<dbReference type="CDD" id="cd06223">
    <property type="entry name" value="PRTases_typeI"/>
    <property type="match status" value="1"/>
</dbReference>
<dbReference type="Gene3D" id="3.40.50.2020">
    <property type="match status" value="1"/>
</dbReference>
<dbReference type="HAMAP" id="MF_01903">
    <property type="entry name" value="XGPRT"/>
    <property type="match status" value="1"/>
</dbReference>
<dbReference type="InterPro" id="IPR000836">
    <property type="entry name" value="PRibTrfase_dom"/>
</dbReference>
<dbReference type="InterPro" id="IPR029057">
    <property type="entry name" value="PRTase-like"/>
</dbReference>
<dbReference type="InterPro" id="IPR023747">
    <property type="entry name" value="Xanthine_Guanine_PRibTrfase"/>
</dbReference>
<dbReference type="NCBIfam" id="NF006613">
    <property type="entry name" value="PRK09177.1"/>
    <property type="match status" value="1"/>
</dbReference>
<dbReference type="PANTHER" id="PTHR39563">
    <property type="entry name" value="XANTHINE PHOSPHORIBOSYLTRANSFERASE"/>
    <property type="match status" value="1"/>
</dbReference>
<dbReference type="PANTHER" id="PTHR39563:SF1">
    <property type="entry name" value="XANTHINE-GUANINE PHOSPHORIBOSYLTRANSFERASE"/>
    <property type="match status" value="1"/>
</dbReference>
<dbReference type="Pfam" id="PF00156">
    <property type="entry name" value="Pribosyltran"/>
    <property type="match status" value="1"/>
</dbReference>
<dbReference type="SUPFAM" id="SSF53271">
    <property type="entry name" value="PRTase-like"/>
    <property type="match status" value="1"/>
</dbReference>
<dbReference type="PROSITE" id="PS00103">
    <property type="entry name" value="PUR_PYR_PR_TRANSFER"/>
    <property type="match status" value="1"/>
</dbReference>
<organism>
    <name type="scientific">Oleidesulfovibrio alaskensis (strain ATCC BAA-1058 / DSM 17464 / G20)</name>
    <name type="common">Desulfovibrio alaskensis</name>
    <dbReference type="NCBI Taxonomy" id="207559"/>
    <lineage>
        <taxon>Bacteria</taxon>
        <taxon>Pseudomonadati</taxon>
        <taxon>Thermodesulfobacteriota</taxon>
        <taxon>Desulfovibrionia</taxon>
        <taxon>Desulfovibrionales</taxon>
        <taxon>Desulfovibrionaceae</taxon>
        <taxon>Oleidesulfovibrio</taxon>
    </lineage>
</organism>
<sequence length="162" mass="18276">MADPDRYNKMFPVSWEQLHRDTRALSWRLMERGPFKGIVAITRGGLVPAAILARELEVRLVDTICIASYDWKSQGGISVLKGVEGDGEGWLIVDDLVDTGTTARAVREMLPKAHFATVYAKPSGRPVVDTYITEVSQDTWILFPWDSEIQYVQPLVNRRQEG</sequence>
<feature type="chain" id="PRO_0000261005" description="Xanthine-guanine phosphoribosyltransferase">
    <location>
        <begin position="1"/>
        <end position="162"/>
    </location>
</feature>
<feature type="binding site" evidence="1">
    <location>
        <begin position="43"/>
        <end position="44"/>
    </location>
    <ligand>
        <name>5-phospho-alpha-D-ribose 1-diphosphate</name>
        <dbReference type="ChEBI" id="CHEBI:58017"/>
    </ligand>
</feature>
<feature type="binding site" evidence="1">
    <location>
        <begin position="94"/>
        <end position="102"/>
    </location>
    <ligand>
        <name>5-phospho-alpha-D-ribose 1-diphosphate</name>
        <dbReference type="ChEBI" id="CHEBI:58017"/>
    </ligand>
</feature>
<feature type="binding site" evidence="1">
    <location>
        <position position="95"/>
    </location>
    <ligand>
        <name>Mg(2+)</name>
        <dbReference type="ChEBI" id="CHEBI:18420"/>
    </ligand>
</feature>
<feature type="binding site" evidence="1">
    <location>
        <begin position="98"/>
        <end position="102"/>
    </location>
    <ligand>
        <name>GMP</name>
        <dbReference type="ChEBI" id="CHEBI:58115"/>
    </ligand>
</feature>
<feature type="binding site" evidence="1">
    <location>
        <position position="98"/>
    </location>
    <ligand>
        <name>guanine</name>
        <dbReference type="ChEBI" id="CHEBI:16235"/>
    </ligand>
</feature>
<feature type="binding site" evidence="1">
    <location>
        <position position="98"/>
    </location>
    <ligand>
        <name>xanthine</name>
        <dbReference type="ChEBI" id="CHEBI:17712"/>
    </ligand>
</feature>
<feature type="binding site" evidence="1">
    <location>
        <begin position="140"/>
        <end position="141"/>
    </location>
    <ligand>
        <name>GMP</name>
        <dbReference type="ChEBI" id="CHEBI:58115"/>
    </ligand>
</feature>
<feature type="binding site" evidence="1">
    <location>
        <position position="141"/>
    </location>
    <ligand>
        <name>guanine</name>
        <dbReference type="ChEBI" id="CHEBI:16235"/>
    </ligand>
</feature>
<feature type="binding site" evidence="1">
    <location>
        <position position="141"/>
    </location>
    <ligand>
        <name>xanthine</name>
        <dbReference type="ChEBI" id="CHEBI:17712"/>
    </ligand>
</feature>
<protein>
    <recommendedName>
        <fullName evidence="1">Xanthine-guanine phosphoribosyltransferase</fullName>
        <shortName evidence="1">XGPRT</shortName>
        <ecNumber evidence="1">2.4.2.-</ecNumber>
        <ecNumber evidence="1">2.4.2.22</ecNumber>
    </recommendedName>
    <alternativeName>
        <fullName evidence="1">Xanthine phosphoribosyltransferase</fullName>
    </alternativeName>
</protein>
<name>XGPT_OLEA2</name>
<reference key="1">
    <citation type="journal article" date="2011" name="J. Bacteriol.">
        <title>Complete genome sequence and updated annotation of Desulfovibrio alaskensis G20.</title>
        <authorList>
            <person name="Hauser L.J."/>
            <person name="Land M.L."/>
            <person name="Brown S.D."/>
            <person name="Larimer F."/>
            <person name="Keller K.L."/>
            <person name="Rapp-Giles B.J."/>
            <person name="Price M.N."/>
            <person name="Lin M."/>
            <person name="Bruce D.C."/>
            <person name="Detter J.C."/>
            <person name="Tapia R."/>
            <person name="Han C.S."/>
            <person name="Goodwin L.A."/>
            <person name="Cheng J.F."/>
            <person name="Pitluck S."/>
            <person name="Copeland A."/>
            <person name="Lucas S."/>
            <person name="Nolan M."/>
            <person name="Lapidus A.L."/>
            <person name="Palumbo A.V."/>
            <person name="Wall J.D."/>
        </authorList>
    </citation>
    <scope>NUCLEOTIDE SEQUENCE [LARGE SCALE GENOMIC DNA]</scope>
    <source>
        <strain>ATCC BAA-1058 / DSM 17464 / G20</strain>
    </source>
</reference>
<comment type="function">
    <text evidence="1">Purine salvage pathway enzyme that catalyzes the transfer of the ribosyl-5-phosphate group from 5-phospho-alpha-D-ribose 1-diphosphate (PRPP) to the N9 position of the 6-oxopurines guanine and xanthine to form the corresponding ribonucleotides GMP (guanosine 5'-monophosphate) and XMP (xanthosine 5'-monophosphate), with the release of PPi. To a lesser extent, also acts on hypoxanthine.</text>
</comment>
<comment type="catalytic activity">
    <reaction evidence="1">
        <text>GMP + diphosphate = guanine + 5-phospho-alpha-D-ribose 1-diphosphate</text>
        <dbReference type="Rhea" id="RHEA:25424"/>
        <dbReference type="ChEBI" id="CHEBI:16235"/>
        <dbReference type="ChEBI" id="CHEBI:33019"/>
        <dbReference type="ChEBI" id="CHEBI:58017"/>
        <dbReference type="ChEBI" id="CHEBI:58115"/>
    </reaction>
    <physiologicalReaction direction="right-to-left" evidence="1">
        <dbReference type="Rhea" id="RHEA:25426"/>
    </physiologicalReaction>
</comment>
<comment type="catalytic activity">
    <reaction evidence="1">
        <text>XMP + diphosphate = xanthine + 5-phospho-alpha-D-ribose 1-diphosphate</text>
        <dbReference type="Rhea" id="RHEA:10800"/>
        <dbReference type="ChEBI" id="CHEBI:17712"/>
        <dbReference type="ChEBI" id="CHEBI:33019"/>
        <dbReference type="ChEBI" id="CHEBI:57464"/>
        <dbReference type="ChEBI" id="CHEBI:58017"/>
        <dbReference type="EC" id="2.4.2.22"/>
    </reaction>
    <physiologicalReaction direction="right-to-left" evidence="1">
        <dbReference type="Rhea" id="RHEA:10802"/>
    </physiologicalReaction>
</comment>
<comment type="catalytic activity">
    <reaction evidence="1">
        <text>IMP + diphosphate = hypoxanthine + 5-phospho-alpha-D-ribose 1-diphosphate</text>
        <dbReference type="Rhea" id="RHEA:17973"/>
        <dbReference type="ChEBI" id="CHEBI:17368"/>
        <dbReference type="ChEBI" id="CHEBI:33019"/>
        <dbReference type="ChEBI" id="CHEBI:58017"/>
        <dbReference type="ChEBI" id="CHEBI:58053"/>
    </reaction>
    <physiologicalReaction direction="right-to-left" evidence="1">
        <dbReference type="Rhea" id="RHEA:17975"/>
    </physiologicalReaction>
</comment>
<comment type="cofactor">
    <cofactor evidence="1">
        <name>Mg(2+)</name>
        <dbReference type="ChEBI" id="CHEBI:18420"/>
    </cofactor>
</comment>
<comment type="pathway">
    <text evidence="1">Purine metabolism; GMP biosynthesis via salvage pathway; GMP from guanine: step 1/1.</text>
</comment>
<comment type="pathway">
    <text evidence="1">Purine metabolism; XMP biosynthesis via salvage pathway; XMP from xanthine: step 1/1.</text>
</comment>
<comment type="subunit">
    <text evidence="1">Homotetramer.</text>
</comment>
<comment type="subcellular location">
    <subcellularLocation>
        <location evidence="1">Cell inner membrane</location>
        <topology evidence="1">Peripheral membrane protein</topology>
    </subcellularLocation>
</comment>
<comment type="similarity">
    <text evidence="1">Belongs to the purine/pyrimidine phosphoribosyltransferase family. XGPT subfamily.</text>
</comment>
<gene>
    <name evidence="1" type="primary">gpt</name>
    <name type="ordered locus">Dde_1506</name>
</gene>
<evidence type="ECO:0000255" key="1">
    <source>
        <dbReference type="HAMAP-Rule" id="MF_01903"/>
    </source>
</evidence>
<proteinExistence type="inferred from homology"/>
<accession>Q311U1</accession>
<keyword id="KW-0997">Cell inner membrane</keyword>
<keyword id="KW-1003">Cell membrane</keyword>
<keyword id="KW-0328">Glycosyltransferase</keyword>
<keyword id="KW-0460">Magnesium</keyword>
<keyword id="KW-0472">Membrane</keyword>
<keyword id="KW-0479">Metal-binding</keyword>
<keyword id="KW-0660">Purine salvage</keyword>
<keyword id="KW-1185">Reference proteome</keyword>
<keyword id="KW-0808">Transferase</keyword>